<proteinExistence type="inferred from homology"/>
<keyword id="KW-0130">Cell adhesion</keyword>
<keyword id="KW-1003">Cell membrane</keyword>
<keyword id="KW-1015">Disulfide bond</keyword>
<keyword id="KW-0325">Glycoprotein</keyword>
<keyword id="KW-0393">Immunoglobulin domain</keyword>
<keyword id="KW-0472">Membrane</keyword>
<keyword id="KW-0524">Neurogenesis</keyword>
<keyword id="KW-0597">Phosphoprotein</keyword>
<keyword id="KW-0675">Receptor</keyword>
<keyword id="KW-1185">Reference proteome</keyword>
<keyword id="KW-0677">Repeat</keyword>
<keyword id="KW-0732">Signal</keyword>
<keyword id="KW-0812">Transmembrane</keyword>
<keyword id="KW-1133">Transmembrane helix</keyword>
<name>PTK7_DROMO</name>
<dbReference type="EMBL" id="CH933808">
    <property type="protein sequence ID" value="EDW10217.1"/>
    <property type="molecule type" value="Genomic_DNA"/>
</dbReference>
<dbReference type="SMR" id="B4KPU0"/>
<dbReference type="FunCoup" id="B4KPU0">
    <property type="interactions" value="251"/>
</dbReference>
<dbReference type="GlyCosmos" id="B4KPU0">
    <property type="glycosylation" value="8 sites, No reported glycans"/>
</dbReference>
<dbReference type="EnsemblMetazoa" id="FBtr0169374">
    <property type="protein sequence ID" value="FBpp0167866"/>
    <property type="gene ID" value="FBgn0141388"/>
</dbReference>
<dbReference type="EnsemblMetazoa" id="XM_002006246.4">
    <property type="protein sequence ID" value="XP_002006282.1"/>
    <property type="gene ID" value="LOC6580444"/>
</dbReference>
<dbReference type="GeneID" id="6580444"/>
<dbReference type="KEGG" id="dmo:Dmoj_GI18649"/>
<dbReference type="CTD" id="36283"/>
<dbReference type="eggNOG" id="KOG1026">
    <property type="taxonomic scope" value="Eukaryota"/>
</dbReference>
<dbReference type="eggNOG" id="KOG4475">
    <property type="taxonomic scope" value="Eukaryota"/>
</dbReference>
<dbReference type="HOGENOM" id="CLU_012268_0_0_1"/>
<dbReference type="InParanoid" id="B4KPU0"/>
<dbReference type="OMA" id="SHLHIEA"/>
<dbReference type="OrthoDB" id="2413561at2759"/>
<dbReference type="PhylomeDB" id="B4KPU0"/>
<dbReference type="ChiTaRS" id="otk">
    <property type="organism name" value="fly"/>
</dbReference>
<dbReference type="Proteomes" id="UP000009192">
    <property type="component" value="Unassembled WGS sequence"/>
</dbReference>
<dbReference type="GO" id="GO:0030424">
    <property type="term" value="C:axon"/>
    <property type="evidence" value="ECO:0007669"/>
    <property type="project" value="EnsemblMetazoa"/>
</dbReference>
<dbReference type="GO" id="GO:0005886">
    <property type="term" value="C:plasma membrane"/>
    <property type="evidence" value="ECO:0000250"/>
    <property type="project" value="UniProtKB"/>
</dbReference>
<dbReference type="GO" id="GO:0043235">
    <property type="term" value="C:receptor complex"/>
    <property type="evidence" value="ECO:0007669"/>
    <property type="project" value="TreeGrafter"/>
</dbReference>
<dbReference type="GO" id="GO:0005524">
    <property type="term" value="F:ATP binding"/>
    <property type="evidence" value="ECO:0007669"/>
    <property type="project" value="InterPro"/>
</dbReference>
<dbReference type="GO" id="GO:0050839">
    <property type="term" value="F:cell adhesion molecule binding"/>
    <property type="evidence" value="ECO:0000250"/>
    <property type="project" value="UniProtKB"/>
</dbReference>
<dbReference type="GO" id="GO:0046982">
    <property type="term" value="F:protein heterodimerization activity"/>
    <property type="evidence" value="ECO:0007669"/>
    <property type="project" value="EnsemblMetazoa"/>
</dbReference>
<dbReference type="GO" id="GO:0042803">
    <property type="term" value="F:protein homodimerization activity"/>
    <property type="evidence" value="ECO:0007669"/>
    <property type="project" value="EnsemblMetazoa"/>
</dbReference>
<dbReference type="GO" id="GO:0004672">
    <property type="term" value="F:protein kinase activity"/>
    <property type="evidence" value="ECO:0000250"/>
    <property type="project" value="UniProtKB"/>
</dbReference>
<dbReference type="GO" id="GO:0038023">
    <property type="term" value="F:signaling receptor activity"/>
    <property type="evidence" value="ECO:0000250"/>
    <property type="project" value="UniProtKB"/>
</dbReference>
<dbReference type="GO" id="GO:0004714">
    <property type="term" value="F:transmembrane receptor protein tyrosine kinase activity"/>
    <property type="evidence" value="ECO:0007669"/>
    <property type="project" value="EnsemblMetazoa"/>
</dbReference>
<dbReference type="GO" id="GO:0017147">
    <property type="term" value="F:Wnt-protein binding"/>
    <property type="evidence" value="ECO:0007669"/>
    <property type="project" value="EnsemblMetazoa"/>
</dbReference>
<dbReference type="GO" id="GO:0007155">
    <property type="term" value="P:cell adhesion"/>
    <property type="evidence" value="ECO:0000250"/>
    <property type="project" value="UniProtKB"/>
</dbReference>
<dbReference type="GO" id="GO:0007169">
    <property type="term" value="P:cell surface receptor protein tyrosine kinase signaling pathway"/>
    <property type="evidence" value="ECO:0007669"/>
    <property type="project" value="TreeGrafter"/>
</dbReference>
<dbReference type="GO" id="GO:0048804">
    <property type="term" value="P:imaginal disc-derived female genitalia morphogenesis"/>
    <property type="evidence" value="ECO:0007669"/>
    <property type="project" value="EnsemblMetazoa"/>
</dbReference>
<dbReference type="GO" id="GO:0048803">
    <property type="term" value="P:imaginal disc-derived male genitalia morphogenesis"/>
    <property type="evidence" value="ECO:0007669"/>
    <property type="project" value="EnsemblMetazoa"/>
</dbReference>
<dbReference type="GO" id="GO:0035260">
    <property type="term" value="P:internal genitalia morphogenesis"/>
    <property type="evidence" value="ECO:0007669"/>
    <property type="project" value="EnsemblMetazoa"/>
</dbReference>
<dbReference type="GO" id="GO:0090090">
    <property type="term" value="P:negative regulation of canonical Wnt signaling pathway"/>
    <property type="evidence" value="ECO:0007669"/>
    <property type="project" value="EnsemblMetazoa"/>
</dbReference>
<dbReference type="GO" id="GO:0072499">
    <property type="term" value="P:photoreceptor cell axon guidance"/>
    <property type="evidence" value="ECO:0007669"/>
    <property type="project" value="EnsemblMetazoa"/>
</dbReference>
<dbReference type="GO" id="GO:0010976">
    <property type="term" value="P:positive regulation of neuron projection development"/>
    <property type="evidence" value="ECO:0007669"/>
    <property type="project" value="TreeGrafter"/>
</dbReference>
<dbReference type="GO" id="GO:0051897">
    <property type="term" value="P:positive regulation of phosphatidylinositol 3-kinase/protein kinase B signal transduction"/>
    <property type="evidence" value="ECO:0007669"/>
    <property type="project" value="TreeGrafter"/>
</dbReference>
<dbReference type="GO" id="GO:0031290">
    <property type="term" value="P:retinal ganglion cell axon guidance"/>
    <property type="evidence" value="ECO:0000250"/>
    <property type="project" value="UniProtKB"/>
</dbReference>
<dbReference type="CDD" id="cd00096">
    <property type="entry name" value="Ig"/>
    <property type="match status" value="2"/>
</dbReference>
<dbReference type="FunFam" id="1.10.510.10:FF:000954">
    <property type="entry name" value="Tyrosine-protein kinase-like otk"/>
    <property type="match status" value="1"/>
</dbReference>
<dbReference type="FunFam" id="2.60.40.10:FF:001805">
    <property type="entry name" value="Tyrosine-protein kinase-like otk"/>
    <property type="match status" value="1"/>
</dbReference>
<dbReference type="FunFam" id="2.60.40.10:FF:002027">
    <property type="entry name" value="Tyrosine-protein kinase-like otk"/>
    <property type="match status" value="1"/>
</dbReference>
<dbReference type="FunFam" id="2.60.40.10:FF:002086">
    <property type="entry name" value="Tyrosine-protein kinase-like otk"/>
    <property type="match status" value="1"/>
</dbReference>
<dbReference type="FunFam" id="2.60.40.10:FF:002809">
    <property type="entry name" value="Tyrosine-protein kinase-like otk"/>
    <property type="match status" value="1"/>
</dbReference>
<dbReference type="FunFam" id="3.30.200.20:FF:001776">
    <property type="entry name" value="Tyrosine-protein kinase-like otk"/>
    <property type="match status" value="1"/>
</dbReference>
<dbReference type="FunFam" id="2.60.40.10:FF:002127">
    <property type="entry name" value="tyrosine-protein kinase-like otk"/>
    <property type="match status" value="1"/>
</dbReference>
<dbReference type="Gene3D" id="2.60.40.10">
    <property type="entry name" value="Immunoglobulins"/>
    <property type="match status" value="5"/>
</dbReference>
<dbReference type="Gene3D" id="3.30.200.20">
    <property type="entry name" value="Phosphorylase Kinase, domain 1"/>
    <property type="match status" value="1"/>
</dbReference>
<dbReference type="Gene3D" id="1.10.510.10">
    <property type="entry name" value="Transferase(Phosphotransferase) domain 1"/>
    <property type="match status" value="1"/>
</dbReference>
<dbReference type="InterPro" id="IPR007110">
    <property type="entry name" value="Ig-like_dom"/>
</dbReference>
<dbReference type="InterPro" id="IPR036179">
    <property type="entry name" value="Ig-like_dom_sf"/>
</dbReference>
<dbReference type="InterPro" id="IPR013783">
    <property type="entry name" value="Ig-like_fold"/>
</dbReference>
<dbReference type="InterPro" id="IPR013098">
    <property type="entry name" value="Ig_I-set"/>
</dbReference>
<dbReference type="InterPro" id="IPR003599">
    <property type="entry name" value="Ig_sub"/>
</dbReference>
<dbReference type="InterPro" id="IPR003598">
    <property type="entry name" value="Ig_sub2"/>
</dbReference>
<dbReference type="InterPro" id="IPR011009">
    <property type="entry name" value="Kinase-like_dom_sf"/>
</dbReference>
<dbReference type="InterPro" id="IPR000719">
    <property type="entry name" value="Prot_kinase_dom"/>
</dbReference>
<dbReference type="InterPro" id="IPR050122">
    <property type="entry name" value="RTK"/>
</dbReference>
<dbReference type="InterPro" id="IPR001245">
    <property type="entry name" value="Ser-Thr/Tyr_kinase_cat_dom"/>
</dbReference>
<dbReference type="InterPro" id="IPR008266">
    <property type="entry name" value="Tyr_kinase_AS"/>
</dbReference>
<dbReference type="InterPro" id="IPR020635">
    <property type="entry name" value="Tyr_kinase_cat_dom"/>
</dbReference>
<dbReference type="PANTHER" id="PTHR24416">
    <property type="entry name" value="TYROSINE-PROTEIN KINASE RECEPTOR"/>
    <property type="match status" value="1"/>
</dbReference>
<dbReference type="PANTHER" id="PTHR24416:SF349">
    <property type="entry name" value="TYROSINE-PROTEIN KINASE RYK"/>
    <property type="match status" value="1"/>
</dbReference>
<dbReference type="Pfam" id="PF07679">
    <property type="entry name" value="I-set"/>
    <property type="match status" value="1"/>
</dbReference>
<dbReference type="Pfam" id="PF13927">
    <property type="entry name" value="Ig_3"/>
    <property type="match status" value="3"/>
</dbReference>
<dbReference type="Pfam" id="PF07714">
    <property type="entry name" value="PK_Tyr_Ser-Thr"/>
    <property type="match status" value="1"/>
</dbReference>
<dbReference type="PIRSF" id="PIRSF000615">
    <property type="entry name" value="TyrPK_CSF1-R"/>
    <property type="match status" value="1"/>
</dbReference>
<dbReference type="PRINTS" id="PR00109">
    <property type="entry name" value="TYRKINASE"/>
</dbReference>
<dbReference type="SMART" id="SM00409">
    <property type="entry name" value="IG"/>
    <property type="match status" value="5"/>
</dbReference>
<dbReference type="SMART" id="SM00408">
    <property type="entry name" value="IGc2"/>
    <property type="match status" value="5"/>
</dbReference>
<dbReference type="SMART" id="SM00219">
    <property type="entry name" value="TyrKc"/>
    <property type="match status" value="1"/>
</dbReference>
<dbReference type="SUPFAM" id="SSF48726">
    <property type="entry name" value="Immunoglobulin"/>
    <property type="match status" value="5"/>
</dbReference>
<dbReference type="SUPFAM" id="SSF56112">
    <property type="entry name" value="Protein kinase-like (PK-like)"/>
    <property type="match status" value="1"/>
</dbReference>
<dbReference type="PROSITE" id="PS50835">
    <property type="entry name" value="IG_LIKE"/>
    <property type="match status" value="5"/>
</dbReference>
<dbReference type="PROSITE" id="PS50011">
    <property type="entry name" value="PROTEIN_KINASE_DOM"/>
    <property type="match status" value="1"/>
</dbReference>
<dbReference type="PROSITE" id="PS00109">
    <property type="entry name" value="PROTEIN_KINASE_TYR"/>
    <property type="match status" value="1"/>
</dbReference>
<gene>
    <name evidence="2" type="primary">otk</name>
    <name type="ORF">GI18649</name>
</gene>
<organism>
    <name type="scientific">Drosophila mojavensis</name>
    <name type="common">Fruit fly</name>
    <dbReference type="NCBI Taxonomy" id="7230"/>
    <lineage>
        <taxon>Eukaryota</taxon>
        <taxon>Metazoa</taxon>
        <taxon>Ecdysozoa</taxon>
        <taxon>Arthropoda</taxon>
        <taxon>Hexapoda</taxon>
        <taxon>Insecta</taxon>
        <taxon>Pterygota</taxon>
        <taxon>Neoptera</taxon>
        <taxon>Endopterygota</taxon>
        <taxon>Diptera</taxon>
        <taxon>Brachycera</taxon>
        <taxon>Muscomorpha</taxon>
        <taxon>Ephydroidea</taxon>
        <taxon>Drosophilidae</taxon>
        <taxon>Drosophila</taxon>
    </lineage>
</organism>
<comment type="function">
    <text evidence="1">Acts as a calcium-dependent, homophilic cell adhesion molecule that regulates neural recognition during the development of the nervous system. Component of the repulsive Plexin signaling response to regulate motor axon guidance at the embryonic stage. Also component of a receptor complex that is required in the adult visual system to innervate the lamina layer; specific targeting of R1-R6 axons (By similarity).</text>
</comment>
<comment type="subunit">
    <text evidence="1">Interacts with plexA; component of a receptor complex that mediates the repulsive signaling in response to Semaphorin ligands.</text>
</comment>
<comment type="subcellular location">
    <subcellularLocation>
        <location evidence="2">Cell membrane</location>
        <topology evidence="2">Single-pass type I membrane protein</topology>
    </subcellularLocation>
</comment>
<comment type="similarity">
    <text evidence="5">Belongs to the protein kinase superfamily. Tyr protein kinase family. Insulin receptor subfamily.</text>
</comment>
<comment type="caution">
    <text evidence="7">The D.melanogaster ortholog of this protein has been proposed to undergo autophosphorylation on tyrosine residues which is induced in response to cell adhesion (PubMed:1371458). However as mammalian orthologs of this protein seem to lack kinase activity this protein may associate with, and be phosphorylated by, an unknown active tyrosine kinase.</text>
</comment>
<reference evidence="8" key="1">
    <citation type="journal article" date="2007" name="Nature">
        <title>Evolution of genes and genomes on the Drosophila phylogeny.</title>
        <authorList>
            <consortium name="Drosophila 12 genomes consortium"/>
        </authorList>
    </citation>
    <scope>NUCLEOTIDE SEQUENCE [LARGE SCALE GENOMIC DNA]</scope>
    <source>
        <strain evidence="8">Tucson 15081-1352.22</strain>
    </source>
</reference>
<evidence type="ECO:0000250" key="1"/>
<evidence type="ECO:0000250" key="2">
    <source>
        <dbReference type="UniProtKB" id="Q6AWJ9"/>
    </source>
</evidence>
<evidence type="ECO:0000255" key="3"/>
<evidence type="ECO:0000255" key="4">
    <source>
        <dbReference type="PROSITE-ProRule" id="PRU00114"/>
    </source>
</evidence>
<evidence type="ECO:0000255" key="5">
    <source>
        <dbReference type="PROSITE-ProRule" id="PRU00159"/>
    </source>
</evidence>
<evidence type="ECO:0000256" key="6">
    <source>
        <dbReference type="SAM" id="MobiDB-lite"/>
    </source>
</evidence>
<evidence type="ECO:0000305" key="7"/>
<evidence type="ECO:0000312" key="8">
    <source>
        <dbReference type="EMBL" id="EDW10217.1"/>
    </source>
</evidence>
<accession>B4KPU0</accession>
<protein>
    <recommendedName>
        <fullName evidence="2">Tyrosine-protein kinase-like otk</fullName>
    </recommendedName>
    <alternativeName>
        <fullName>Tyrosine-protein kinase-like 7 homolog</fullName>
    </alternativeName>
</protein>
<feature type="signal peptide" evidence="3">
    <location>
        <begin position="1"/>
        <end position="25"/>
    </location>
</feature>
<feature type="chain" id="PRO_0000388688" description="Tyrosine-protein kinase-like otk" evidence="3">
    <location>
        <begin position="26"/>
        <end position="1045"/>
    </location>
</feature>
<feature type="topological domain" description="Extracellular" evidence="3">
    <location>
        <begin position="26"/>
        <end position="587"/>
    </location>
</feature>
<feature type="transmembrane region" description="Helical" evidence="3">
    <location>
        <begin position="588"/>
        <end position="608"/>
    </location>
</feature>
<feature type="topological domain" description="Cytoplasmic" evidence="3">
    <location>
        <begin position="609"/>
        <end position="1045"/>
    </location>
</feature>
<feature type="domain" description="Ig-like C2-type 1" evidence="3">
    <location>
        <begin position="26"/>
        <end position="116"/>
    </location>
</feature>
<feature type="domain" description="Ig-like C2-type 2" evidence="3">
    <location>
        <begin position="115"/>
        <end position="200"/>
    </location>
</feature>
<feature type="domain" description="Ig-like C2-type 3" evidence="3">
    <location>
        <begin position="260"/>
        <end position="373"/>
    </location>
</feature>
<feature type="domain" description="Ig-like C2-type 4" evidence="3">
    <location>
        <begin position="376"/>
        <end position="469"/>
    </location>
</feature>
<feature type="domain" description="Ig-like C2-type 5" evidence="3">
    <location>
        <begin position="474"/>
        <end position="564"/>
    </location>
</feature>
<feature type="domain" description="Protein kinase; inactive" evidence="5 7">
    <location>
        <begin position="695"/>
        <end position="1040"/>
    </location>
</feature>
<feature type="region of interest" description="Disordered" evidence="6">
    <location>
        <begin position="628"/>
        <end position="676"/>
    </location>
</feature>
<feature type="region of interest" description="Disordered" evidence="6">
    <location>
        <begin position="722"/>
        <end position="790"/>
    </location>
</feature>
<feature type="compositionally biased region" description="Basic and acidic residues" evidence="6">
    <location>
        <begin position="725"/>
        <end position="736"/>
    </location>
</feature>
<feature type="compositionally biased region" description="Gly residues" evidence="6">
    <location>
        <begin position="743"/>
        <end position="752"/>
    </location>
</feature>
<feature type="compositionally biased region" description="Acidic residues" evidence="6">
    <location>
        <begin position="771"/>
        <end position="782"/>
    </location>
</feature>
<feature type="modified residue" description="Phosphoserine" evidence="2">
    <location>
        <position position="681"/>
    </location>
</feature>
<feature type="glycosylation site" description="N-linked (GlcNAc...) asparagine" evidence="3">
    <location>
        <position position="344"/>
    </location>
</feature>
<feature type="glycosylation site" description="N-linked (GlcNAc...) asparagine" evidence="3">
    <location>
        <position position="424"/>
    </location>
</feature>
<feature type="glycosylation site" description="N-linked (GlcNAc...) asparagine" evidence="3">
    <location>
        <position position="435"/>
    </location>
</feature>
<feature type="glycosylation site" description="N-linked (GlcNAc...) asparagine" evidence="3">
    <location>
        <position position="442"/>
    </location>
</feature>
<feature type="glycosylation site" description="N-linked (GlcNAc...) asparagine" evidence="3">
    <location>
        <position position="450"/>
    </location>
</feature>
<feature type="glycosylation site" description="N-linked (GlcNAc...) asparagine" evidence="3">
    <location>
        <position position="463"/>
    </location>
</feature>
<feature type="glycosylation site" description="N-linked (GlcNAc...) asparagine" evidence="3">
    <location>
        <position position="518"/>
    </location>
</feature>
<feature type="glycosylation site" description="N-linked (GlcNAc...) asparagine" evidence="3">
    <location>
        <position position="530"/>
    </location>
</feature>
<feature type="disulfide bond" evidence="4">
    <location>
        <begin position="49"/>
        <end position="97"/>
    </location>
</feature>
<feature type="disulfide bond" evidence="4">
    <location>
        <begin position="139"/>
        <end position="189"/>
    </location>
</feature>
<feature type="disulfide bond" evidence="4">
    <location>
        <begin position="285"/>
        <end position="362"/>
    </location>
</feature>
<feature type="disulfide bond" evidence="4">
    <location>
        <begin position="406"/>
        <end position="453"/>
    </location>
</feature>
<feature type="disulfide bond" evidence="4">
    <location>
        <begin position="496"/>
        <end position="548"/>
    </location>
</feature>
<sequence length="1045" mass="114469">MPIVMDMNMLLMLSLAFTVMAPASASSSRFTQPPQSQAIVENDAADFSCEATGPSGDLHYEWLHNGQQIGYDSRVLQIGSNLRIESVQREDAGDYVCIAASAASGARQASPPAKLSVIFLDAVTVQLLGSNRNELLLKCHVEGASGDEPLQIEWYRDSAKLSSWQNVELQQHRLLVRQPSSADDGLYRCIASNAAARVMSKQGYVYEHLASVAPGSTKCLPKLKRNQKMPESWGKQVFLCRGKRGGSTGMDQSQSLPPSPEGLRIVQGPNDKLIIKEGEPTTLSCLYELPAELQNQRIQLRWRKDGKILRHVELGDAVVPGLALDHGKDALVREDGRLVLHKQNGTLSFNSIIASDAGQYMCQIQLEGHAPVNSAPGALEVIEQLKFMPQPTSKNLELGALGKLHCKAQGTPTPQVQWLRDAANGSLPEHVDDINGTLIFRNVSAEHRGNYTCVASNSQGQINATVAINVVVAPRFSVAPEGPIESSEQGVAVIHCQAIGDPKPTIQWDKDLKYLSENNTDRQRFSFLENGTLEIRNVQAEDEGKYGCTIGNSAGLKREEVRLLVRGNGDGFITEESAGDGFLVTRAVLITMTVALAYIVLVVGLMLWCRYRRQARKARLNELSIKEAGGDQAESGKNTEQEPCLSKQRNGHGKSRTAANGDAQKSDDTACSQQSKASKKSAHIYEQLALPRSGLSELIQIGRGEFGDVFVGKLKASLVAAASPSDKDADTEKQHSNSENGSGASGASGCGSGSTTLSTLNEKRRSKTSMDDIEEIKEEEQPQEQAQSESTADLLVMVKALNKVKDEQACQEFRRQLDLLRAISHKGVVRLFGLCREKDPHYMVLEYTDWGDLKQFLLATAGKVNTATATSSPPPLTTSQLLAVAYQIARGMDAIYRARFTHRDLATRNCVISSEFIVKVAYPALCKDKYSREYHKHRNTLLPVRWLAPECIQEDEYTTKSDIFAFAVVVWELFNQATKLPHEDLSNEQVVQRSLANTLEWSVAEGTPDGLKEILLSCWLTNPKERPSFSQLGAALSKAMQAAEK</sequence>